<dbReference type="EMBL" id="Z97340">
    <property type="protein sequence ID" value="CAB10394.1"/>
    <property type="status" value="ALT_SEQ"/>
    <property type="molecule type" value="Genomic_DNA"/>
</dbReference>
<dbReference type="EMBL" id="AL161543">
    <property type="protein sequence ID" value="CAB78657.1"/>
    <property type="status" value="ALT_SEQ"/>
    <property type="molecule type" value="Genomic_DNA"/>
</dbReference>
<dbReference type="EMBL" id="CP002687">
    <property type="protein sequence ID" value="AEE83703.2"/>
    <property type="molecule type" value="Genomic_DNA"/>
</dbReference>
<dbReference type="EMBL" id="AY128295">
    <property type="protein sequence ID" value="AAM91103.1"/>
    <property type="molecule type" value="mRNA"/>
</dbReference>
<dbReference type="PIR" id="H71427">
    <property type="entry name" value="H71427"/>
</dbReference>
<dbReference type="RefSeq" id="NP_193350.6">
    <property type="nucleotide sequence ID" value="NM_117710.6"/>
</dbReference>
<dbReference type="RefSeq" id="NP_193443.4">
    <property type="nucleotide sequence ID" value="NM_117814.4"/>
</dbReference>
<dbReference type="RefSeq" id="NP_680766.6">
    <property type="nucleotide sequence ID" value="NM_148400.6"/>
</dbReference>
<dbReference type="SMR" id="O23463"/>
<dbReference type="BioGRID" id="12599">
    <property type="interactions" value="1"/>
</dbReference>
<dbReference type="FunCoup" id="O23463">
    <property type="interactions" value="737"/>
</dbReference>
<dbReference type="IntAct" id="O23463">
    <property type="interactions" value="1"/>
</dbReference>
<dbReference type="STRING" id="3702.O23463"/>
<dbReference type="GlyGen" id="O23463">
    <property type="glycosylation" value="1 site"/>
</dbReference>
<dbReference type="iPTMnet" id="O23463"/>
<dbReference type="PaxDb" id="3702-AT4G16150.1"/>
<dbReference type="ProteomicsDB" id="220532"/>
<dbReference type="GeneID" id="827305"/>
<dbReference type="KEGG" id="ath:AT4G15200"/>
<dbReference type="KEGG" id="ath:AT4G15950"/>
<dbReference type="KEGG" id="ath:AT4G16150"/>
<dbReference type="KEGG" id="ath:AT4G17100"/>
<dbReference type="KEGG" id="ath:AT4G35335"/>
<dbReference type="Araport" id="AT4G16150"/>
<dbReference type="TAIR" id="AT4G16150"/>
<dbReference type="eggNOG" id="KOG0520">
    <property type="taxonomic scope" value="Eukaryota"/>
</dbReference>
<dbReference type="HOGENOM" id="CLU_316342_0_0_1"/>
<dbReference type="InParanoid" id="O23463"/>
<dbReference type="PhylomeDB" id="O23463"/>
<dbReference type="PRO" id="PR:O23463"/>
<dbReference type="Proteomes" id="UP000006548">
    <property type="component" value="Chromosome 4"/>
</dbReference>
<dbReference type="ExpressionAtlas" id="O23463">
    <property type="expression patterns" value="baseline and differential"/>
</dbReference>
<dbReference type="GO" id="GO:0005634">
    <property type="term" value="C:nucleus"/>
    <property type="evidence" value="ECO:0000314"/>
    <property type="project" value="UniProtKB"/>
</dbReference>
<dbReference type="GO" id="GO:0005516">
    <property type="term" value="F:calmodulin binding"/>
    <property type="evidence" value="ECO:0007669"/>
    <property type="project" value="UniProtKB-KW"/>
</dbReference>
<dbReference type="GO" id="GO:0003700">
    <property type="term" value="F:DNA-binding transcription factor activity"/>
    <property type="evidence" value="ECO:0000314"/>
    <property type="project" value="TAIR"/>
</dbReference>
<dbReference type="GO" id="GO:0003690">
    <property type="term" value="F:double-stranded DNA binding"/>
    <property type="evidence" value="ECO:0000318"/>
    <property type="project" value="GO_Central"/>
</dbReference>
<dbReference type="GO" id="GO:0043565">
    <property type="term" value="F:sequence-specific DNA binding"/>
    <property type="evidence" value="ECO:0000314"/>
    <property type="project" value="TAIR"/>
</dbReference>
<dbReference type="GO" id="GO:0003712">
    <property type="term" value="F:transcription coregulator activity"/>
    <property type="evidence" value="ECO:0000318"/>
    <property type="project" value="GO_Central"/>
</dbReference>
<dbReference type="GO" id="GO:0070417">
    <property type="term" value="P:cellular response to cold"/>
    <property type="evidence" value="ECO:0000316"/>
    <property type="project" value="TAIR"/>
</dbReference>
<dbReference type="GO" id="GO:0006355">
    <property type="term" value="P:regulation of DNA-templated transcription"/>
    <property type="evidence" value="ECO:0000304"/>
    <property type="project" value="TAIR"/>
</dbReference>
<dbReference type="GO" id="GO:0006357">
    <property type="term" value="P:regulation of transcription by RNA polymerase II"/>
    <property type="evidence" value="ECO:0000318"/>
    <property type="project" value="GO_Central"/>
</dbReference>
<dbReference type="GO" id="GO:0009409">
    <property type="term" value="P:response to cold"/>
    <property type="evidence" value="ECO:0000315"/>
    <property type="project" value="UniProtKB"/>
</dbReference>
<dbReference type="CDD" id="cd23767">
    <property type="entry name" value="IQCD"/>
    <property type="match status" value="2"/>
</dbReference>
<dbReference type="FunFam" id="2.60.40.10:FF:001656">
    <property type="entry name" value="Calmodulin-binding transcription activator 5"/>
    <property type="match status" value="1"/>
</dbReference>
<dbReference type="FunFam" id="1.25.40.20:FF:000150">
    <property type="entry name" value="calmodulin-binding transcription activator 5"/>
    <property type="match status" value="1"/>
</dbReference>
<dbReference type="Gene3D" id="1.20.5.190">
    <property type="match status" value="1"/>
</dbReference>
<dbReference type="Gene3D" id="1.25.40.20">
    <property type="entry name" value="Ankyrin repeat-containing domain"/>
    <property type="match status" value="1"/>
</dbReference>
<dbReference type="Gene3D" id="2.60.40.10">
    <property type="entry name" value="Immunoglobulins"/>
    <property type="match status" value="1"/>
</dbReference>
<dbReference type="InterPro" id="IPR002110">
    <property type="entry name" value="Ankyrin_rpt"/>
</dbReference>
<dbReference type="InterPro" id="IPR036770">
    <property type="entry name" value="Ankyrin_rpt-contain_sf"/>
</dbReference>
<dbReference type="InterPro" id="IPR005559">
    <property type="entry name" value="CG-1_dom"/>
</dbReference>
<dbReference type="InterPro" id="IPR013783">
    <property type="entry name" value="Ig-like_fold"/>
</dbReference>
<dbReference type="InterPro" id="IPR014756">
    <property type="entry name" value="Ig_E-set"/>
</dbReference>
<dbReference type="InterPro" id="IPR000048">
    <property type="entry name" value="IQ_motif_EF-hand-BS"/>
</dbReference>
<dbReference type="PANTHER" id="PTHR23335:SF3">
    <property type="entry name" value="CALMODULIN-BINDING TRANSCRIPTION ACTIVATOR 5"/>
    <property type="match status" value="1"/>
</dbReference>
<dbReference type="PANTHER" id="PTHR23335">
    <property type="entry name" value="CALMODULIN-BINDING TRANSCRIPTION ACTIVATOR CAMTA"/>
    <property type="match status" value="1"/>
</dbReference>
<dbReference type="Pfam" id="PF12796">
    <property type="entry name" value="Ank_2"/>
    <property type="match status" value="1"/>
</dbReference>
<dbReference type="Pfam" id="PF03859">
    <property type="entry name" value="CG-1"/>
    <property type="match status" value="1"/>
</dbReference>
<dbReference type="Pfam" id="PF00612">
    <property type="entry name" value="IQ"/>
    <property type="match status" value="1"/>
</dbReference>
<dbReference type="SMART" id="SM00248">
    <property type="entry name" value="ANK"/>
    <property type="match status" value="1"/>
</dbReference>
<dbReference type="SMART" id="SM01076">
    <property type="entry name" value="CG-1"/>
    <property type="match status" value="1"/>
</dbReference>
<dbReference type="SMART" id="SM00015">
    <property type="entry name" value="IQ"/>
    <property type="match status" value="3"/>
</dbReference>
<dbReference type="SUPFAM" id="SSF48403">
    <property type="entry name" value="Ankyrin repeat"/>
    <property type="match status" value="1"/>
</dbReference>
<dbReference type="SUPFAM" id="SSF81296">
    <property type="entry name" value="E set domains"/>
    <property type="match status" value="1"/>
</dbReference>
<dbReference type="PROSITE" id="PS50297">
    <property type="entry name" value="ANK_REP_REGION"/>
    <property type="match status" value="1"/>
</dbReference>
<dbReference type="PROSITE" id="PS50088">
    <property type="entry name" value="ANK_REPEAT"/>
    <property type="match status" value="1"/>
</dbReference>
<dbReference type="PROSITE" id="PS51437">
    <property type="entry name" value="CG_1"/>
    <property type="match status" value="1"/>
</dbReference>
<dbReference type="PROSITE" id="PS50096">
    <property type="entry name" value="IQ"/>
    <property type="match status" value="3"/>
</dbReference>
<feature type="chain" id="PRO_0000114490" description="Calmodulin-binding transcription activator 5">
    <location>
        <begin position="1"/>
        <end position="923"/>
    </location>
</feature>
<feature type="repeat" description="ANK">
    <location>
        <begin position="611"/>
        <end position="640"/>
    </location>
</feature>
<feature type="domain" description="IQ 1" evidence="4">
    <location>
        <begin position="757"/>
        <end position="786"/>
    </location>
</feature>
<feature type="domain" description="IQ 2" evidence="4">
    <location>
        <begin position="799"/>
        <end position="828"/>
    </location>
</feature>
<feature type="domain" description="IQ 3" evidence="4">
    <location>
        <begin position="875"/>
        <end position="904"/>
    </location>
</feature>
<feature type="DNA-binding region" description="CG-1" evidence="5">
    <location>
        <begin position="25"/>
        <end position="151"/>
    </location>
</feature>
<feature type="region of interest" description="Transcription activation" evidence="7">
    <location>
        <begin position="272"/>
        <end position="372"/>
    </location>
</feature>
<feature type="region of interest" description="Calmodulin-binding" evidence="2">
    <location>
        <begin position="824"/>
        <end position="846"/>
    </location>
</feature>
<feature type="coiled-coil region" evidence="3">
    <location>
        <begin position="887"/>
        <end position="914"/>
    </location>
</feature>
<name>CMTA5_ARATH</name>
<organism>
    <name type="scientific">Arabidopsis thaliana</name>
    <name type="common">Mouse-ear cress</name>
    <dbReference type="NCBI Taxonomy" id="3702"/>
    <lineage>
        <taxon>Eukaryota</taxon>
        <taxon>Viridiplantae</taxon>
        <taxon>Streptophyta</taxon>
        <taxon>Embryophyta</taxon>
        <taxon>Tracheophyta</taxon>
        <taxon>Spermatophyta</taxon>
        <taxon>Magnoliopsida</taxon>
        <taxon>eudicotyledons</taxon>
        <taxon>Gunneridae</taxon>
        <taxon>Pentapetalae</taxon>
        <taxon>rosids</taxon>
        <taxon>malvids</taxon>
        <taxon>Brassicales</taxon>
        <taxon>Brassicaceae</taxon>
        <taxon>Camelineae</taxon>
        <taxon>Arabidopsis</taxon>
    </lineage>
</organism>
<comment type="function">
    <text evidence="1 7 8 13">Transcription activator (PubMed:14581622). Binds to the DNA consensus sequence 5'-[ACG]CGCG[GTC]-3' (By similarity). Regulates transcriptional activity in response to calcium signals (Probable). Binds calmodulin in a calcium-dependent manner (By similarity). Involved in response to cold. Contributes together with CAMTA3 to the positive regulation of the cold-induced expression of DREB1A/CBF3, DREB1B/CBF1 and DREB1C/CBF2 (PubMed:28351986).</text>
</comment>
<comment type="subcellular location">
    <subcellularLocation>
        <location evidence="5 7 8">Nucleus</location>
    </subcellularLocation>
</comment>
<comment type="tissue specificity">
    <text evidence="6 7">Expressed in roots, stems, leaves, pollen, top of sepals and siliques.</text>
</comment>
<comment type="induction">
    <text evidence="6">By heat shock, UVB, wounding, abscisic acid, H(2)O(2) and salicylic acid.</text>
</comment>
<comment type="similarity">
    <text evidence="12">Belongs to the CAMTA family.</text>
</comment>
<comment type="sequence caution" evidence="12">
    <conflict type="erroneous gene model prediction">
        <sequence resource="EMBL-CDS" id="CAB10394"/>
    </conflict>
</comment>
<comment type="sequence caution" evidence="12">
    <conflict type="frameshift">
        <sequence resource="EMBL-CDS" id="CAB10394"/>
    </conflict>
</comment>
<comment type="sequence caution" evidence="12">
    <conflict type="erroneous gene model prediction">
        <sequence resource="EMBL-CDS" id="CAB78657"/>
    </conflict>
</comment>
<comment type="sequence caution" evidence="12">
    <conflict type="frameshift">
        <sequence resource="EMBL-CDS" id="CAB78657"/>
    </conflict>
</comment>
<protein>
    <recommendedName>
        <fullName evidence="10">Calmodulin-binding transcription activator 5</fullName>
        <shortName evidence="10">AtCAMTA5</shortName>
    </recommendedName>
    <alternativeName>
        <fullName evidence="9">Ethylene-induced calmodulin-binding protein f</fullName>
        <shortName evidence="9">EICBP.f</shortName>
    </alternativeName>
    <alternativeName>
        <fullName evidence="11">Signal-responsive protein 6</fullName>
        <shortName evidence="11">AtSR6</shortName>
    </alternativeName>
</protein>
<accession>O23463</accession>
<accession>Q8L7R9</accession>
<reference key="1">
    <citation type="journal article" date="1998" name="Nature">
        <title>Analysis of 1.9 Mb of contiguous sequence from chromosome 4 of Arabidopsis thaliana.</title>
        <authorList>
            <person name="Bevan M."/>
            <person name="Bancroft I."/>
            <person name="Bent E."/>
            <person name="Love K."/>
            <person name="Goodman H.M."/>
            <person name="Dean C."/>
            <person name="Bergkamp R."/>
            <person name="Dirkse W."/>
            <person name="van Staveren M."/>
            <person name="Stiekema W."/>
            <person name="Drost L."/>
            <person name="Ridley P."/>
            <person name="Hudson S.-A."/>
            <person name="Patel K."/>
            <person name="Murphy G."/>
            <person name="Piffanelli P."/>
            <person name="Wedler H."/>
            <person name="Wedler E."/>
            <person name="Wambutt R."/>
            <person name="Weitzenegger T."/>
            <person name="Pohl T."/>
            <person name="Terryn N."/>
            <person name="Gielen J."/>
            <person name="Villarroel R."/>
            <person name="De Clercq R."/>
            <person name="van Montagu M."/>
            <person name="Lecharny A."/>
            <person name="Aubourg S."/>
            <person name="Gy I."/>
            <person name="Kreis M."/>
            <person name="Lao N."/>
            <person name="Kavanagh T."/>
            <person name="Hempel S."/>
            <person name="Kotter P."/>
            <person name="Entian K.-D."/>
            <person name="Rieger M."/>
            <person name="Schaefer M."/>
            <person name="Funk B."/>
            <person name="Mueller-Auer S."/>
            <person name="Silvey M."/>
            <person name="James R."/>
            <person name="Monfort A."/>
            <person name="Pons A."/>
            <person name="Puigdomenech P."/>
            <person name="Douka A."/>
            <person name="Voukelatou E."/>
            <person name="Milioni D."/>
            <person name="Hatzopoulos P."/>
            <person name="Piravandi E."/>
            <person name="Obermaier B."/>
            <person name="Hilbert H."/>
            <person name="Duesterhoeft A."/>
            <person name="Moores T."/>
            <person name="Jones J.D.G."/>
            <person name="Eneva T."/>
            <person name="Palme K."/>
            <person name="Benes V."/>
            <person name="Rechmann S."/>
            <person name="Ansorge W."/>
            <person name="Cooke R."/>
            <person name="Berger C."/>
            <person name="Delseny M."/>
            <person name="Voet M."/>
            <person name="Volckaert G."/>
            <person name="Mewes H.-W."/>
            <person name="Klosterman S."/>
            <person name="Schueller C."/>
            <person name="Chalwatzis N."/>
        </authorList>
    </citation>
    <scope>NUCLEOTIDE SEQUENCE [LARGE SCALE GENOMIC DNA]</scope>
    <source>
        <strain>cv. Columbia</strain>
    </source>
</reference>
<reference key="2">
    <citation type="journal article" date="1999" name="Nature">
        <title>Sequence and analysis of chromosome 4 of the plant Arabidopsis thaliana.</title>
        <authorList>
            <person name="Mayer K.F.X."/>
            <person name="Schueller C."/>
            <person name="Wambutt R."/>
            <person name="Murphy G."/>
            <person name="Volckaert G."/>
            <person name="Pohl T."/>
            <person name="Duesterhoeft A."/>
            <person name="Stiekema W."/>
            <person name="Entian K.-D."/>
            <person name="Terryn N."/>
            <person name="Harris B."/>
            <person name="Ansorge W."/>
            <person name="Brandt P."/>
            <person name="Grivell L.A."/>
            <person name="Rieger M."/>
            <person name="Weichselgartner M."/>
            <person name="de Simone V."/>
            <person name="Obermaier B."/>
            <person name="Mache R."/>
            <person name="Mueller M."/>
            <person name="Kreis M."/>
            <person name="Delseny M."/>
            <person name="Puigdomenech P."/>
            <person name="Watson M."/>
            <person name="Schmidtheini T."/>
            <person name="Reichert B."/>
            <person name="Portetelle D."/>
            <person name="Perez-Alonso M."/>
            <person name="Boutry M."/>
            <person name="Bancroft I."/>
            <person name="Vos P."/>
            <person name="Hoheisel J."/>
            <person name="Zimmermann W."/>
            <person name="Wedler H."/>
            <person name="Ridley P."/>
            <person name="Langham S.-A."/>
            <person name="McCullagh B."/>
            <person name="Bilham L."/>
            <person name="Robben J."/>
            <person name="van der Schueren J."/>
            <person name="Grymonprez B."/>
            <person name="Chuang Y.-J."/>
            <person name="Vandenbussche F."/>
            <person name="Braeken M."/>
            <person name="Weltjens I."/>
            <person name="Voet M."/>
            <person name="Bastiaens I."/>
            <person name="Aert R."/>
            <person name="Defoor E."/>
            <person name="Weitzenegger T."/>
            <person name="Bothe G."/>
            <person name="Ramsperger U."/>
            <person name="Hilbert H."/>
            <person name="Braun M."/>
            <person name="Holzer E."/>
            <person name="Brandt A."/>
            <person name="Peters S."/>
            <person name="van Staveren M."/>
            <person name="Dirkse W."/>
            <person name="Mooijman P."/>
            <person name="Klein Lankhorst R."/>
            <person name="Rose M."/>
            <person name="Hauf J."/>
            <person name="Koetter P."/>
            <person name="Berneiser S."/>
            <person name="Hempel S."/>
            <person name="Feldpausch M."/>
            <person name="Lamberth S."/>
            <person name="Van den Daele H."/>
            <person name="De Keyser A."/>
            <person name="Buysshaert C."/>
            <person name="Gielen J."/>
            <person name="Villarroel R."/>
            <person name="De Clercq R."/>
            <person name="van Montagu M."/>
            <person name="Rogers J."/>
            <person name="Cronin A."/>
            <person name="Quail M.A."/>
            <person name="Bray-Allen S."/>
            <person name="Clark L."/>
            <person name="Doggett J."/>
            <person name="Hall S."/>
            <person name="Kay M."/>
            <person name="Lennard N."/>
            <person name="McLay K."/>
            <person name="Mayes R."/>
            <person name="Pettett A."/>
            <person name="Rajandream M.A."/>
            <person name="Lyne M."/>
            <person name="Benes V."/>
            <person name="Rechmann S."/>
            <person name="Borkova D."/>
            <person name="Bloecker H."/>
            <person name="Scharfe M."/>
            <person name="Grimm M."/>
            <person name="Loehnert T.-H."/>
            <person name="Dose S."/>
            <person name="de Haan M."/>
            <person name="Maarse A.C."/>
            <person name="Schaefer M."/>
            <person name="Mueller-Auer S."/>
            <person name="Gabel C."/>
            <person name="Fuchs M."/>
            <person name="Fartmann B."/>
            <person name="Granderath K."/>
            <person name="Dauner D."/>
            <person name="Herzl A."/>
            <person name="Neumann S."/>
            <person name="Argiriou A."/>
            <person name="Vitale D."/>
            <person name="Liguori R."/>
            <person name="Piravandi E."/>
            <person name="Massenet O."/>
            <person name="Quigley F."/>
            <person name="Clabauld G."/>
            <person name="Muendlein A."/>
            <person name="Felber R."/>
            <person name="Schnabl S."/>
            <person name="Hiller R."/>
            <person name="Schmidt W."/>
            <person name="Lecharny A."/>
            <person name="Aubourg S."/>
            <person name="Chefdor F."/>
            <person name="Cooke R."/>
            <person name="Berger C."/>
            <person name="Monfort A."/>
            <person name="Casacuberta E."/>
            <person name="Gibbons T."/>
            <person name="Weber N."/>
            <person name="Vandenbol M."/>
            <person name="Bargues M."/>
            <person name="Terol J."/>
            <person name="Torres A."/>
            <person name="Perez-Perez A."/>
            <person name="Purnelle B."/>
            <person name="Bent E."/>
            <person name="Johnson S."/>
            <person name="Tacon D."/>
            <person name="Jesse T."/>
            <person name="Heijnen L."/>
            <person name="Schwarz S."/>
            <person name="Scholler P."/>
            <person name="Heber S."/>
            <person name="Francs P."/>
            <person name="Bielke C."/>
            <person name="Frishman D."/>
            <person name="Haase D."/>
            <person name="Lemcke K."/>
            <person name="Mewes H.-W."/>
            <person name="Stocker S."/>
            <person name="Zaccaria P."/>
            <person name="Bevan M."/>
            <person name="Wilson R.K."/>
            <person name="de la Bastide M."/>
            <person name="Habermann K."/>
            <person name="Parnell L."/>
            <person name="Dedhia N."/>
            <person name="Gnoj L."/>
            <person name="Schutz K."/>
            <person name="Huang E."/>
            <person name="Spiegel L."/>
            <person name="Sekhon M."/>
            <person name="Murray J."/>
            <person name="Sheet P."/>
            <person name="Cordes M."/>
            <person name="Abu-Threideh J."/>
            <person name="Stoneking T."/>
            <person name="Kalicki J."/>
            <person name="Graves T."/>
            <person name="Harmon G."/>
            <person name="Edwards J."/>
            <person name="Latreille P."/>
            <person name="Courtney L."/>
            <person name="Cloud J."/>
            <person name="Abbott A."/>
            <person name="Scott K."/>
            <person name="Johnson D."/>
            <person name="Minx P."/>
            <person name="Bentley D."/>
            <person name="Fulton B."/>
            <person name="Miller N."/>
            <person name="Greco T."/>
            <person name="Kemp K."/>
            <person name="Kramer J."/>
            <person name="Fulton L."/>
            <person name="Mardis E."/>
            <person name="Dante M."/>
            <person name="Pepin K."/>
            <person name="Hillier L.W."/>
            <person name="Nelson J."/>
            <person name="Spieth J."/>
            <person name="Ryan E."/>
            <person name="Andrews S."/>
            <person name="Geisel C."/>
            <person name="Layman D."/>
            <person name="Du H."/>
            <person name="Ali J."/>
            <person name="Berghoff A."/>
            <person name="Jones K."/>
            <person name="Drone K."/>
            <person name="Cotton M."/>
            <person name="Joshu C."/>
            <person name="Antonoiu B."/>
            <person name="Zidanic M."/>
            <person name="Strong C."/>
            <person name="Sun H."/>
            <person name="Lamar B."/>
            <person name="Yordan C."/>
            <person name="Ma P."/>
            <person name="Zhong J."/>
            <person name="Preston R."/>
            <person name="Vil D."/>
            <person name="Shekher M."/>
            <person name="Matero A."/>
            <person name="Shah R."/>
            <person name="Swaby I.K."/>
            <person name="O'Shaughnessy A."/>
            <person name="Rodriguez M."/>
            <person name="Hoffman J."/>
            <person name="Till S."/>
            <person name="Granat S."/>
            <person name="Shohdy N."/>
            <person name="Hasegawa A."/>
            <person name="Hameed A."/>
            <person name="Lodhi M."/>
            <person name="Johnson A."/>
            <person name="Chen E."/>
            <person name="Marra M.A."/>
            <person name="Martienssen R."/>
            <person name="McCombie W.R."/>
        </authorList>
    </citation>
    <scope>NUCLEOTIDE SEQUENCE [LARGE SCALE GENOMIC DNA]</scope>
    <source>
        <strain>cv. Columbia</strain>
    </source>
</reference>
<reference key="3">
    <citation type="journal article" date="2017" name="Plant J.">
        <title>Araport11: a complete reannotation of the Arabidopsis thaliana reference genome.</title>
        <authorList>
            <person name="Cheng C.Y."/>
            <person name="Krishnakumar V."/>
            <person name="Chan A.P."/>
            <person name="Thibaud-Nissen F."/>
            <person name="Schobel S."/>
            <person name="Town C.D."/>
        </authorList>
    </citation>
    <scope>GENOME REANNOTATION</scope>
    <source>
        <strain>cv. Columbia</strain>
    </source>
</reference>
<reference key="4">
    <citation type="journal article" date="2003" name="Science">
        <title>Empirical analysis of transcriptional activity in the Arabidopsis genome.</title>
        <authorList>
            <person name="Yamada K."/>
            <person name="Lim J."/>
            <person name="Dale J.M."/>
            <person name="Chen H."/>
            <person name="Shinn P."/>
            <person name="Palm C.J."/>
            <person name="Southwick A.M."/>
            <person name="Wu H.C."/>
            <person name="Kim C.J."/>
            <person name="Nguyen M."/>
            <person name="Pham P.K."/>
            <person name="Cheuk R.F."/>
            <person name="Karlin-Newmann G."/>
            <person name="Liu S.X."/>
            <person name="Lam B."/>
            <person name="Sakano H."/>
            <person name="Wu T."/>
            <person name="Yu G."/>
            <person name="Miranda M."/>
            <person name="Quach H.L."/>
            <person name="Tripp M."/>
            <person name="Chang C.H."/>
            <person name="Lee J.M."/>
            <person name="Toriumi M.J."/>
            <person name="Chan M.M."/>
            <person name="Tang C.C."/>
            <person name="Onodera C.S."/>
            <person name="Deng J.M."/>
            <person name="Akiyama K."/>
            <person name="Ansari Y."/>
            <person name="Arakawa T."/>
            <person name="Banh J."/>
            <person name="Banno F."/>
            <person name="Bowser L."/>
            <person name="Brooks S.Y."/>
            <person name="Carninci P."/>
            <person name="Chao Q."/>
            <person name="Choy N."/>
            <person name="Enju A."/>
            <person name="Goldsmith A.D."/>
            <person name="Gurjal M."/>
            <person name="Hansen N.F."/>
            <person name="Hayashizaki Y."/>
            <person name="Johnson-Hopson C."/>
            <person name="Hsuan V.W."/>
            <person name="Iida K."/>
            <person name="Karnes M."/>
            <person name="Khan S."/>
            <person name="Koesema E."/>
            <person name="Ishida J."/>
            <person name="Jiang P.X."/>
            <person name="Jones T."/>
            <person name="Kawai J."/>
            <person name="Kamiya A."/>
            <person name="Meyers C."/>
            <person name="Nakajima M."/>
            <person name="Narusaka M."/>
            <person name="Seki M."/>
            <person name="Sakurai T."/>
            <person name="Satou M."/>
            <person name="Tamse R."/>
            <person name="Vaysberg M."/>
            <person name="Wallender E.K."/>
            <person name="Wong C."/>
            <person name="Yamamura Y."/>
            <person name="Yuan S."/>
            <person name="Shinozaki K."/>
            <person name="Davis R.W."/>
            <person name="Theologis A."/>
            <person name="Ecker J.R."/>
        </authorList>
    </citation>
    <scope>NUCLEOTIDE SEQUENCE [LARGE SCALE MRNA]</scope>
    <source>
        <strain>cv. Columbia</strain>
    </source>
</reference>
<reference key="5">
    <citation type="journal article" date="2002" name="J. Biol. Chem.">
        <title>A novel family of calmodulin-binding transcription activators in multicellular organisms.</title>
        <authorList>
            <person name="Bouche N."/>
            <person name="Scharlat A."/>
            <person name="Snedden W."/>
            <person name="Bouchez D."/>
            <person name="Fromm H."/>
        </authorList>
    </citation>
    <scope>FUNCTION</scope>
    <scope>GENE FAMILY</scope>
    <scope>NOMENCLATURE</scope>
</reference>
<reference key="6">
    <citation type="journal article" date="2002" name="J. Biol. Chem.">
        <title>A calmodulin-binding/CGCG box DNA-binding protein family involved in multiple signaling pathways in plants.</title>
        <authorList>
            <person name="Yang T."/>
            <person name="Poovaiah B.W."/>
        </authorList>
    </citation>
    <scope>INDUCTION</scope>
    <scope>TISSUE SPECIFICITY</scope>
</reference>
<reference key="7">
    <citation type="journal article" date="2003" name="Plant Cell Physiol.">
        <title>Arabidopsis CAMTA family proteins enhance V-PPase expression in pollen.</title>
        <authorList>
            <person name="Mitsuda N."/>
            <person name="Isono T."/>
            <person name="Sato M.H."/>
        </authorList>
    </citation>
    <scope>TISSUE SPECIFICITY</scope>
    <scope>SUBCELLULAR LOCATION</scope>
</reference>
<reference key="8">
    <citation type="journal article" date="2002" name="J. Biol. Chem.">
        <title>Genes encoding calmodulin-binding proteins in the Arabidopsis genome.</title>
        <authorList>
            <person name="Reddy V.S."/>
            <person name="Ali G.S."/>
            <person name="Reddy A.S.N."/>
        </authorList>
    </citation>
    <scope>IDENTIFICATION</scope>
</reference>
<reference key="9">
    <citation type="journal article" date="2017" name="Plant Cell">
        <title>Different cold-signaling pathways function in the responses to rapid and gradual decreases in temperature.</title>
        <authorList>
            <person name="Kidokoro S."/>
            <person name="Yoneda K."/>
            <person name="Takasaki H."/>
            <person name="Takahashi F."/>
            <person name="Shinozaki K."/>
            <person name="Yamaguchi-Shinozaki K."/>
        </authorList>
    </citation>
    <scope>FUNCTION</scope>
    <scope>SUBCELLULAR LOCATION</scope>
</reference>
<evidence type="ECO:0000250" key="1">
    <source>
        <dbReference type="UniProtKB" id="Q8GSA7"/>
    </source>
</evidence>
<evidence type="ECO:0000250" key="2">
    <source>
        <dbReference type="UniProtKB" id="Q9FY74"/>
    </source>
</evidence>
<evidence type="ECO:0000255" key="3"/>
<evidence type="ECO:0000255" key="4">
    <source>
        <dbReference type="PROSITE-ProRule" id="PRU00116"/>
    </source>
</evidence>
<evidence type="ECO:0000255" key="5">
    <source>
        <dbReference type="PROSITE-ProRule" id="PRU00767"/>
    </source>
</evidence>
<evidence type="ECO:0000269" key="6">
    <source>
    </source>
</evidence>
<evidence type="ECO:0000269" key="7">
    <source>
    </source>
</evidence>
<evidence type="ECO:0000269" key="8">
    <source>
    </source>
</evidence>
<evidence type="ECO:0000303" key="9">
    <source>
    </source>
</evidence>
<evidence type="ECO:0000303" key="10">
    <source>
    </source>
</evidence>
<evidence type="ECO:0000303" key="11">
    <source>
    </source>
</evidence>
<evidence type="ECO:0000305" key="12"/>
<evidence type="ECO:0000305" key="13">
    <source>
    </source>
</evidence>
<evidence type="ECO:0000312" key="14">
    <source>
        <dbReference type="Araport" id="AT4G16150"/>
    </source>
</evidence>
<evidence type="ECO:0000312" key="15">
    <source>
        <dbReference type="EMBL" id="CAB10394.1"/>
    </source>
</evidence>
<evidence type="ECO:0000312" key="16">
    <source>
        <dbReference type="EMBL" id="CAB78657.1"/>
    </source>
</evidence>
<keyword id="KW-0010">Activator</keyword>
<keyword id="KW-0040">ANK repeat</keyword>
<keyword id="KW-0106">Calcium</keyword>
<keyword id="KW-0112">Calmodulin-binding</keyword>
<keyword id="KW-0175">Coiled coil</keyword>
<keyword id="KW-0238">DNA-binding</keyword>
<keyword id="KW-0539">Nucleus</keyword>
<keyword id="KW-1185">Reference proteome</keyword>
<keyword id="KW-0677">Repeat</keyword>
<keyword id="KW-0346">Stress response</keyword>
<keyword id="KW-0804">Transcription</keyword>
<keyword id="KW-0805">Transcription regulation</keyword>
<gene>
    <name evidence="10" type="primary">CAMTA5</name>
    <name evidence="12" type="synonym">CMTA5</name>
    <name evidence="11" type="synonym">SR6</name>
    <name evidence="14" type="ordered locus">At4g16150</name>
    <name evidence="15" type="ORF">dl4115W</name>
    <name evidence="16" type="ORF">FCAALL.291</name>
</gene>
<sequence length="923" mass="104847">MAGVDSGKLIGSEIHGFHTLQDLDIQTMLDEAYSRWLRPNEIHALLCNHKFFTINVKPVNLPKSGTIVLFDRKMLRNFRKDGHNWKKKKDGKTIKEAHEHLKVGNEERIHVYYAHGEDTPTFVRRCYWLLDKSQEHIVLVHYRETHEVHAAPATPGNSYSSSITDHLSPKIVAEDTSSGVHNTCNTGFEVRSNSLGSRNHEIRLHEINTLDWDELLVPADISNQSHPTEEDMLYFTEQLQTAPRGSVKQGNHLAGYNGSVDIPSFPGLEDPVYQNNNSCGAGEFSSQHSHCGVDPNLQRRDFSATVTDQPGDALLNNGYGSQDSFGRWVNNFISDSPGSVDDPSLEAVYTPGQDSSTPPTVFHSHSDIPEQVFNITDVSPAWAYSTEKTKILVTGFFHDSFQHLGRSNLICICGELRVPAEFLQMGVYRCFLPPQSPGVVNLYLSVDGNKPISQLFSFEHRSVQFIEKAIPQDDQLYKWEEFEFQVRLAHLLFTSSNKISVLTSKISPENLLEAKKLASRTSHLLNSWAYLMKSIQANEVPFDQARDHLFELTLKNRLKEWLLEKVIENRNTKEYDSKGLGVIHLCAVLGYTWSILLFSWANISLDFRDKQGWTALHWAAYYGREKMVAALLSAGARPNLVTDPTKEFLGGCTAADLAQQKGYDGLAAFLAEKCLVAQFKDMQTAGNISGNLETIKAEKSSNPGNANEEEQSLKDTLAAYRTAAEAAARIQGAFREHELKVRSSAVRFASKEEEAKNIIAAMKIQHAFRNFEVRRKIAAAARIQYRFQTWKMRREFLNMRKKAIRIQAAFRGFQVRRQYQKITWSVGVLEKAILRWRLKRKGFRGLQVSQPDEKEGSEAVEDFYKTSQKQAEERLERSVVKVQAMFRSKKAQQDYRRMKLAHEEAQLEYDGMQELDQMATEES</sequence>
<proteinExistence type="evidence at transcript level"/>